<proteinExistence type="evidence at protein level"/>
<dbReference type="EC" id="2.4.1.41"/>
<dbReference type="EMBL" id="AB078145">
    <property type="protein sequence ID" value="BAC56890.1"/>
    <property type="molecule type" value="mRNA"/>
</dbReference>
<dbReference type="EMBL" id="AJ505950">
    <property type="protein sequence ID" value="CAD44532.1"/>
    <property type="molecule type" value="mRNA"/>
</dbReference>
<dbReference type="EMBL" id="AK023782">
    <property type="protein sequence ID" value="BAB14676.1"/>
    <property type="status" value="ALT_INIT"/>
    <property type="molecule type" value="mRNA"/>
</dbReference>
<dbReference type="EMBL" id="AK127135">
    <property type="protein sequence ID" value="BAG54441.1"/>
    <property type="molecule type" value="mRNA"/>
</dbReference>
<dbReference type="EMBL" id="AL096739">
    <property type="protein sequence ID" value="CAB46378.1"/>
    <property type="molecule type" value="mRNA"/>
</dbReference>
<dbReference type="EMBL" id="AK074132">
    <property type="protein sequence ID" value="BAB84958.1"/>
    <property type="molecule type" value="mRNA"/>
</dbReference>
<dbReference type="EMBL" id="BC007224">
    <property type="protein sequence ID" value="AAH07224.2"/>
    <property type="molecule type" value="mRNA"/>
</dbReference>
<dbReference type="EMBL" id="BC072450">
    <property type="protein sequence ID" value="AAH72450.1"/>
    <property type="molecule type" value="mRNA"/>
</dbReference>
<dbReference type="CCDS" id="CCDS4325.1">
    <molecule id="Q86SR1-1"/>
</dbReference>
<dbReference type="PIR" id="T12552">
    <property type="entry name" value="T12552"/>
</dbReference>
<dbReference type="RefSeq" id="NP_938080.1">
    <molecule id="Q86SR1-1"/>
    <property type="nucleotide sequence ID" value="NM_198321.4"/>
</dbReference>
<dbReference type="PDB" id="2D7I">
    <property type="method" value="X-ray"/>
    <property type="resolution" value="2.50 A"/>
    <property type="chains" value="A=40-603"/>
</dbReference>
<dbReference type="PDB" id="2D7R">
    <property type="method" value="X-ray"/>
    <property type="resolution" value="2.80 A"/>
    <property type="chains" value="A=40-603"/>
</dbReference>
<dbReference type="PDBsum" id="2D7I"/>
<dbReference type="PDBsum" id="2D7R"/>
<dbReference type="SMR" id="Q86SR1"/>
<dbReference type="BioGRID" id="120723">
    <property type="interactions" value="74"/>
</dbReference>
<dbReference type="FunCoup" id="Q86SR1">
    <property type="interactions" value="896"/>
</dbReference>
<dbReference type="IntAct" id="Q86SR1">
    <property type="interactions" value="48"/>
</dbReference>
<dbReference type="MINT" id="Q86SR1"/>
<dbReference type="STRING" id="9606.ENSP00000297107"/>
<dbReference type="BindingDB" id="Q86SR1"/>
<dbReference type="ChEMBL" id="CHEMBL4523371"/>
<dbReference type="CAZy" id="CBM13">
    <property type="family name" value="Carbohydrate-Binding Module Family 13"/>
</dbReference>
<dbReference type="CAZy" id="GT27">
    <property type="family name" value="Glycosyltransferase Family 27"/>
</dbReference>
<dbReference type="UniLectin" id="Q86SR1"/>
<dbReference type="GlyCosmos" id="Q86SR1">
    <property type="glycosylation" value="5 sites, 1 glycan"/>
</dbReference>
<dbReference type="GlyGen" id="Q86SR1">
    <property type="glycosylation" value="9 sites, 3 O-linked glycans (4 sites)"/>
</dbReference>
<dbReference type="iPTMnet" id="Q86SR1"/>
<dbReference type="PhosphoSitePlus" id="Q86SR1"/>
<dbReference type="SwissPalm" id="Q86SR1"/>
<dbReference type="BioMuta" id="GALNT10"/>
<dbReference type="DMDM" id="51315962"/>
<dbReference type="jPOST" id="Q86SR1"/>
<dbReference type="MassIVE" id="Q86SR1"/>
<dbReference type="PaxDb" id="9606-ENSP00000297107"/>
<dbReference type="PeptideAtlas" id="Q86SR1"/>
<dbReference type="ProteomicsDB" id="69624">
    <molecule id="Q86SR1-1"/>
</dbReference>
<dbReference type="ProteomicsDB" id="69625">
    <molecule id="Q86SR1-2"/>
</dbReference>
<dbReference type="ProteomicsDB" id="69626">
    <molecule id="Q86SR1-3"/>
</dbReference>
<dbReference type="ProteomicsDB" id="69627">
    <molecule id="Q86SR1-4"/>
</dbReference>
<dbReference type="Pumba" id="Q86SR1"/>
<dbReference type="Antibodypedia" id="2029">
    <property type="antibodies" value="160 antibodies from 25 providers"/>
</dbReference>
<dbReference type="DNASU" id="55568"/>
<dbReference type="Ensembl" id="ENST00000297107.11">
    <molecule id="Q86SR1-1"/>
    <property type="protein sequence ID" value="ENSP00000297107.6"/>
    <property type="gene ID" value="ENSG00000164574.16"/>
</dbReference>
<dbReference type="Ensembl" id="ENST00000377661.2">
    <molecule id="Q86SR1-2"/>
    <property type="protein sequence ID" value="ENSP00000366889.2"/>
    <property type="gene ID" value="ENSG00000164574.16"/>
</dbReference>
<dbReference type="Ensembl" id="ENST00000425427.6">
    <molecule id="Q86SR1-3"/>
    <property type="protein sequence ID" value="ENSP00000415210.2"/>
    <property type="gene ID" value="ENSG00000164574.16"/>
</dbReference>
<dbReference type="GeneID" id="55568"/>
<dbReference type="KEGG" id="hsa:55568"/>
<dbReference type="MANE-Select" id="ENST00000297107.11">
    <property type="protein sequence ID" value="ENSP00000297107.6"/>
    <property type="RefSeq nucleotide sequence ID" value="NM_198321.4"/>
    <property type="RefSeq protein sequence ID" value="NP_938080.1"/>
</dbReference>
<dbReference type="UCSC" id="uc003lvg.2">
    <molecule id="Q86SR1-1"/>
    <property type="organism name" value="human"/>
</dbReference>
<dbReference type="AGR" id="HGNC:19873"/>
<dbReference type="CTD" id="55568"/>
<dbReference type="DisGeNET" id="55568"/>
<dbReference type="GeneCards" id="GALNT10"/>
<dbReference type="HGNC" id="HGNC:19873">
    <property type="gene designation" value="GALNT10"/>
</dbReference>
<dbReference type="HPA" id="ENSG00000164574">
    <property type="expression patterns" value="Tissue enhanced (ovary)"/>
</dbReference>
<dbReference type="MIM" id="608043">
    <property type="type" value="gene"/>
</dbReference>
<dbReference type="neXtProt" id="NX_Q86SR1"/>
<dbReference type="OpenTargets" id="ENSG00000164574"/>
<dbReference type="PharmGKB" id="PA134870832"/>
<dbReference type="VEuPathDB" id="HostDB:ENSG00000164574"/>
<dbReference type="eggNOG" id="KOG3736">
    <property type="taxonomic scope" value="Eukaryota"/>
</dbReference>
<dbReference type="GeneTree" id="ENSGT00940000156690"/>
<dbReference type="HOGENOM" id="CLU_013477_3_3_1"/>
<dbReference type="InParanoid" id="Q86SR1"/>
<dbReference type="OMA" id="KTQFWEL"/>
<dbReference type="OrthoDB" id="6119243at2759"/>
<dbReference type="PAN-GO" id="Q86SR1">
    <property type="GO annotations" value="3 GO annotations based on evolutionary models"/>
</dbReference>
<dbReference type="PhylomeDB" id="Q86SR1"/>
<dbReference type="TreeFam" id="TF313267"/>
<dbReference type="PathwayCommons" id="Q86SR1"/>
<dbReference type="Reactome" id="R-HSA-913709">
    <property type="pathway name" value="O-linked glycosylation of mucins"/>
</dbReference>
<dbReference type="SignaLink" id="Q86SR1"/>
<dbReference type="UniPathway" id="UPA00378"/>
<dbReference type="BioGRID-ORCS" id="55568">
    <property type="hits" value="13 hits in 1154 CRISPR screens"/>
</dbReference>
<dbReference type="ChiTaRS" id="GALNT10">
    <property type="organism name" value="human"/>
</dbReference>
<dbReference type="EvolutionaryTrace" id="Q86SR1"/>
<dbReference type="GenomeRNAi" id="55568"/>
<dbReference type="Pharos" id="Q86SR1">
    <property type="development level" value="Tchem"/>
</dbReference>
<dbReference type="PRO" id="PR:Q86SR1"/>
<dbReference type="Proteomes" id="UP000005640">
    <property type="component" value="Chromosome 5"/>
</dbReference>
<dbReference type="RNAct" id="Q86SR1">
    <property type="molecule type" value="protein"/>
</dbReference>
<dbReference type="Bgee" id="ENSG00000164574">
    <property type="expression patterns" value="Expressed in tendon of biceps brachii and 168 other cell types or tissues"/>
</dbReference>
<dbReference type="ExpressionAtlas" id="Q86SR1">
    <property type="expression patterns" value="baseline and differential"/>
</dbReference>
<dbReference type="GO" id="GO:0005794">
    <property type="term" value="C:Golgi apparatus"/>
    <property type="evidence" value="ECO:0000318"/>
    <property type="project" value="GO_Central"/>
</dbReference>
<dbReference type="GO" id="GO:0000139">
    <property type="term" value="C:Golgi membrane"/>
    <property type="evidence" value="ECO:0000304"/>
    <property type="project" value="Reactome"/>
</dbReference>
<dbReference type="GO" id="GO:0030246">
    <property type="term" value="F:carbohydrate binding"/>
    <property type="evidence" value="ECO:0007669"/>
    <property type="project" value="UniProtKB-KW"/>
</dbReference>
<dbReference type="GO" id="GO:0046872">
    <property type="term" value="F:metal ion binding"/>
    <property type="evidence" value="ECO:0007669"/>
    <property type="project" value="UniProtKB-KW"/>
</dbReference>
<dbReference type="GO" id="GO:0004653">
    <property type="term" value="F:polypeptide N-acetylgalactosaminyltransferase activity"/>
    <property type="evidence" value="ECO:0000314"/>
    <property type="project" value="GO_Central"/>
</dbReference>
<dbReference type="GO" id="GO:0016266">
    <property type="term" value="P:O-glycan processing"/>
    <property type="evidence" value="ECO:0000314"/>
    <property type="project" value="GO_Central"/>
</dbReference>
<dbReference type="GO" id="GO:0006493">
    <property type="term" value="P:protein O-linked glycosylation"/>
    <property type="evidence" value="ECO:0000314"/>
    <property type="project" value="GO_Central"/>
</dbReference>
<dbReference type="CDD" id="cd23476">
    <property type="entry name" value="beta-trefoil_Ricin_GALNT10"/>
    <property type="match status" value="1"/>
</dbReference>
<dbReference type="CDD" id="cd02510">
    <property type="entry name" value="pp-GalNAc-T"/>
    <property type="match status" value="1"/>
</dbReference>
<dbReference type="FunFam" id="2.80.10.50:FF:000011">
    <property type="entry name" value="Polypeptide N-acetylgalactosaminyltransferase"/>
    <property type="match status" value="1"/>
</dbReference>
<dbReference type="FunFam" id="3.90.550.10:FF:000029">
    <property type="entry name" value="Polypeptide N-acetylgalactosaminyltransferase"/>
    <property type="match status" value="1"/>
</dbReference>
<dbReference type="Gene3D" id="2.80.10.50">
    <property type="match status" value="1"/>
</dbReference>
<dbReference type="Gene3D" id="3.90.550.10">
    <property type="entry name" value="Spore Coat Polysaccharide Biosynthesis Protein SpsA, Chain A"/>
    <property type="match status" value="1"/>
</dbReference>
<dbReference type="InterPro" id="IPR045885">
    <property type="entry name" value="GalNAc-T"/>
</dbReference>
<dbReference type="InterPro" id="IPR001173">
    <property type="entry name" value="Glyco_trans_2-like"/>
</dbReference>
<dbReference type="InterPro" id="IPR029044">
    <property type="entry name" value="Nucleotide-diphossugar_trans"/>
</dbReference>
<dbReference type="InterPro" id="IPR035992">
    <property type="entry name" value="Ricin_B-like_lectins"/>
</dbReference>
<dbReference type="InterPro" id="IPR000772">
    <property type="entry name" value="Ricin_B_lectin"/>
</dbReference>
<dbReference type="PANTHER" id="PTHR11675">
    <property type="entry name" value="N-ACETYLGALACTOSAMINYLTRANSFERASE"/>
    <property type="match status" value="1"/>
</dbReference>
<dbReference type="PANTHER" id="PTHR11675:SF41">
    <property type="entry name" value="POLYPEPTIDE N-ACETYLGALACTOSAMINYLTRANSFERASE 10"/>
    <property type="match status" value="1"/>
</dbReference>
<dbReference type="Pfam" id="PF00535">
    <property type="entry name" value="Glycos_transf_2"/>
    <property type="match status" value="1"/>
</dbReference>
<dbReference type="Pfam" id="PF00652">
    <property type="entry name" value="Ricin_B_lectin"/>
    <property type="match status" value="1"/>
</dbReference>
<dbReference type="SMART" id="SM00458">
    <property type="entry name" value="RICIN"/>
    <property type="match status" value="1"/>
</dbReference>
<dbReference type="SUPFAM" id="SSF53448">
    <property type="entry name" value="Nucleotide-diphospho-sugar transferases"/>
    <property type="match status" value="1"/>
</dbReference>
<dbReference type="SUPFAM" id="SSF50370">
    <property type="entry name" value="Ricin B-like lectins"/>
    <property type="match status" value="1"/>
</dbReference>
<dbReference type="PROSITE" id="PS50231">
    <property type="entry name" value="RICIN_B_LECTIN"/>
    <property type="match status" value="1"/>
</dbReference>
<feature type="chain" id="PRO_0000059122" description="Polypeptide N-acetylgalactosaminyltransferase 10">
    <location>
        <begin position="1"/>
        <end position="603"/>
    </location>
</feature>
<feature type="topological domain" description="Cytoplasmic" evidence="2">
    <location>
        <begin position="1"/>
        <end position="11"/>
    </location>
</feature>
<feature type="transmembrane region" description="Helical; Signal-anchor for type II membrane protein" evidence="2">
    <location>
        <begin position="12"/>
        <end position="31"/>
    </location>
</feature>
<feature type="topological domain" description="Lumenal" evidence="2">
    <location>
        <begin position="32"/>
        <end position="603"/>
    </location>
</feature>
<feature type="domain" description="Ricin B-type lectin" evidence="3">
    <location>
        <begin position="458"/>
        <end position="590"/>
    </location>
</feature>
<feature type="region of interest" description="Disordered" evidence="4">
    <location>
        <begin position="38"/>
        <end position="59"/>
    </location>
</feature>
<feature type="region of interest" description="Catalytic subdomain A">
    <location>
        <begin position="144"/>
        <end position="253"/>
    </location>
</feature>
<feature type="region of interest" description="Catalytic subdomain B">
    <location>
        <begin position="311"/>
        <end position="373"/>
    </location>
</feature>
<feature type="region of interest" description="Flexible loop">
    <location>
        <begin position="373"/>
        <end position="384"/>
    </location>
</feature>
<feature type="compositionally biased region" description="Low complexity" evidence="4">
    <location>
        <begin position="45"/>
        <end position="55"/>
    </location>
</feature>
<feature type="binding site">
    <location>
        <position position="154"/>
    </location>
    <ligand>
        <name>substrate</name>
    </ligand>
</feature>
<feature type="binding site">
    <location>
        <position position="156"/>
    </location>
    <ligand>
        <name>substrate</name>
    </ligand>
</feature>
<feature type="binding site">
    <location>
        <position position="185"/>
    </location>
    <ligand>
        <name>substrate</name>
    </ligand>
</feature>
<feature type="binding site">
    <location>
        <position position="214"/>
    </location>
    <ligand>
        <name>substrate</name>
    </ligand>
</feature>
<feature type="binding site">
    <location>
        <position position="237"/>
    </location>
    <ligand>
        <name>Mn(2+)</name>
        <dbReference type="ChEBI" id="CHEBI:29035"/>
    </ligand>
</feature>
<feature type="binding site">
    <location>
        <position position="238"/>
    </location>
    <ligand>
        <name>substrate</name>
    </ligand>
</feature>
<feature type="binding site">
    <location>
        <position position="239"/>
    </location>
    <ligand>
        <name>Mn(2+)</name>
        <dbReference type="ChEBI" id="CHEBI:29035"/>
    </ligand>
</feature>
<feature type="binding site">
    <location>
        <position position="342"/>
    </location>
    <ligand>
        <name>substrate</name>
    </ligand>
</feature>
<feature type="binding site">
    <location>
        <position position="370"/>
    </location>
    <ligand>
        <name>Mn(2+)</name>
        <dbReference type="ChEBI" id="CHEBI:29035"/>
    </ligand>
</feature>
<feature type="binding site">
    <location>
        <position position="373"/>
    </location>
    <ligand>
        <name>substrate</name>
    </ligand>
</feature>
<feature type="binding site">
    <location>
        <position position="378"/>
    </location>
    <ligand>
        <name>substrate</name>
    </ligand>
</feature>
<feature type="glycosylation site" description="N-linked (GlcNAc...) asparagine" evidence="6">
    <location>
        <position position="124"/>
    </location>
</feature>
<feature type="glycosylation site" description="N-linked (GlcNAc...) asparagine" evidence="6">
    <location>
        <position position="146"/>
    </location>
</feature>
<feature type="glycosylation site" description="N-linked (GlcNAc...) asparagine" evidence="6">
    <location>
        <position position="593"/>
    </location>
</feature>
<feature type="disulfide bond" evidence="3 6">
    <location>
        <begin position="135"/>
        <end position="365"/>
    </location>
</feature>
<feature type="disulfide bond" evidence="3 6">
    <location>
        <begin position="356"/>
        <end position="432"/>
    </location>
</feature>
<feature type="disulfide bond" evidence="3 6">
    <location>
        <begin position="471"/>
        <end position="488"/>
    </location>
</feature>
<feature type="disulfide bond" evidence="3 6">
    <location>
        <begin position="523"/>
        <end position="538"/>
    </location>
</feature>
<feature type="disulfide bond" evidence="3 6">
    <location>
        <begin position="563"/>
        <end position="578"/>
    </location>
</feature>
<feature type="splice variant" id="VSP_011207" description="In isoform 4." evidence="9">
    <location>
        <begin position="1"/>
        <end position="329"/>
    </location>
</feature>
<feature type="splice variant" id="VSP_011209" description="In isoform 2." evidence="8">
    <location>
        <begin position="190"/>
        <end position="251"/>
    </location>
</feature>
<feature type="splice variant" id="VSP_011208" description="In isoform 4." evidence="9">
    <original>WELGGYDPGLEIWGGEQYEISFK</original>
    <variation>MLAWRDGELEAETSSSLFLLAMQ</variation>
    <location>
        <begin position="330"/>
        <end position="352"/>
    </location>
</feature>
<feature type="splice variant" id="VSP_011212" description="In isoform 3." evidence="7">
    <original>WMCGGRMEDIPCS</original>
    <variation>SQLSRRPVLGTAS</variation>
    <location>
        <begin position="354"/>
        <end position="366"/>
    </location>
</feature>
<feature type="splice variant" id="VSP_011213" description="In isoform 3." evidence="7">
    <location>
        <begin position="367"/>
        <end position="603"/>
    </location>
</feature>
<feature type="splice variant" id="VSP_011214" description="In isoform 4." evidence="9">
    <original>N</original>
    <variation>VRT</variation>
    <location>
        <position position="389"/>
    </location>
</feature>
<feature type="sequence conflict" description="In Ref. 1; BAC56890 and 3; BAB14676." evidence="10" ref="1 3">
    <original>H</original>
    <variation>Y</variation>
    <location>
        <position position="518"/>
    </location>
</feature>
<feature type="helix" evidence="11">
    <location>
        <begin position="77"/>
        <end position="84"/>
    </location>
</feature>
<feature type="helix" evidence="11">
    <location>
        <begin position="91"/>
        <end position="93"/>
    </location>
</feature>
<feature type="turn" evidence="11">
    <location>
        <begin position="100"/>
        <end position="103"/>
    </location>
</feature>
<feature type="helix" evidence="11">
    <location>
        <begin position="106"/>
        <end position="109"/>
    </location>
</feature>
<feature type="helix" evidence="11">
    <location>
        <begin position="115"/>
        <end position="119"/>
    </location>
</feature>
<feature type="helix" evidence="11">
    <location>
        <begin position="133"/>
        <end position="136"/>
    </location>
</feature>
<feature type="strand" evidence="11">
    <location>
        <begin position="140"/>
        <end position="143"/>
    </location>
</feature>
<feature type="strand" evidence="11">
    <location>
        <begin position="147"/>
        <end position="155"/>
    </location>
</feature>
<feature type="helix" evidence="11">
    <location>
        <begin position="158"/>
        <end position="171"/>
    </location>
</feature>
<feature type="helix" evidence="11">
    <location>
        <begin position="174"/>
        <end position="176"/>
    </location>
</feature>
<feature type="strand" evidence="11">
    <location>
        <begin position="177"/>
        <end position="184"/>
    </location>
</feature>
<feature type="helix" evidence="11">
    <location>
        <begin position="190"/>
        <end position="192"/>
    </location>
</feature>
<feature type="helix" evidence="11">
    <location>
        <begin position="194"/>
        <end position="200"/>
    </location>
</feature>
<feature type="strand" evidence="11">
    <location>
        <begin position="206"/>
        <end position="210"/>
    </location>
</feature>
<feature type="helix" evidence="11">
    <location>
        <begin position="217"/>
        <end position="227"/>
    </location>
</feature>
<feature type="strand" evidence="11">
    <location>
        <begin position="230"/>
        <end position="235"/>
    </location>
</feature>
<feature type="strand" evidence="11">
    <location>
        <begin position="238"/>
        <end position="242"/>
    </location>
</feature>
<feature type="helix" evidence="11">
    <location>
        <begin position="248"/>
        <end position="256"/>
    </location>
</feature>
<feature type="strand" evidence="11">
    <location>
        <begin position="260"/>
        <end position="269"/>
    </location>
</feature>
<feature type="turn" evidence="11">
    <location>
        <begin position="271"/>
        <end position="273"/>
    </location>
</feature>
<feature type="strand" evidence="11">
    <location>
        <begin position="285"/>
        <end position="288"/>
    </location>
</feature>
<feature type="strand" evidence="11">
    <location>
        <begin position="294"/>
        <end position="297"/>
    </location>
</feature>
<feature type="turn" evidence="11">
    <location>
        <begin position="301"/>
        <end position="303"/>
    </location>
</feature>
<feature type="strand" evidence="11">
    <location>
        <begin position="319"/>
        <end position="325"/>
    </location>
</feature>
<feature type="helix" evidence="11">
    <location>
        <begin position="326"/>
        <end position="331"/>
    </location>
</feature>
<feature type="strand" evidence="11">
    <location>
        <begin position="341"/>
        <end position="344"/>
    </location>
</feature>
<feature type="helix" evidence="11">
    <location>
        <begin position="345"/>
        <end position="355"/>
    </location>
</feature>
<feature type="strand" evidence="11">
    <location>
        <begin position="359"/>
        <end position="370"/>
    </location>
</feature>
<feature type="helix" evidence="11">
    <location>
        <begin position="386"/>
        <end position="397"/>
    </location>
</feature>
<feature type="helix" evidence="11">
    <location>
        <begin position="399"/>
        <end position="401"/>
    </location>
</feature>
<feature type="helix" evidence="11">
    <location>
        <begin position="402"/>
        <end position="406"/>
    </location>
</feature>
<feature type="helix" evidence="11">
    <location>
        <begin position="410"/>
        <end position="412"/>
    </location>
</feature>
<feature type="helix" evidence="11">
    <location>
        <begin position="421"/>
        <end position="430"/>
    </location>
</feature>
<feature type="helix" evidence="11">
    <location>
        <begin position="435"/>
        <end position="441"/>
    </location>
</feature>
<feature type="helix" evidence="11">
    <location>
        <begin position="446"/>
        <end position="449"/>
    </location>
</feature>
<feature type="strand" evidence="11">
    <location>
        <begin position="458"/>
        <end position="465"/>
    </location>
</feature>
<feature type="turn" evidence="11">
    <location>
        <begin position="466"/>
        <end position="468"/>
    </location>
</feature>
<feature type="turn" evidence="11">
    <location>
        <begin position="478"/>
        <end position="480"/>
    </location>
</feature>
<feature type="helix" evidence="11">
    <location>
        <begin position="495"/>
        <end position="497"/>
    </location>
</feature>
<feature type="strand" evidence="11">
    <location>
        <begin position="503"/>
        <end position="505"/>
    </location>
</feature>
<feature type="turn" evidence="12">
    <location>
        <begin position="507"/>
        <end position="509"/>
    </location>
</feature>
<feature type="strand" evidence="11">
    <location>
        <begin position="511"/>
        <end position="514"/>
    </location>
</feature>
<feature type="strand" evidence="12">
    <location>
        <begin position="521"/>
        <end position="525"/>
    </location>
</feature>
<feature type="strand" evidence="11">
    <location>
        <begin position="528"/>
        <end position="532"/>
    </location>
</feature>
<feature type="strand" evidence="12">
    <location>
        <begin position="534"/>
        <end position="537"/>
    </location>
</feature>
<feature type="strand" evidence="11">
    <location>
        <begin position="540"/>
        <end position="543"/>
    </location>
</feature>
<feature type="strand" evidence="12">
    <location>
        <begin position="548"/>
        <end position="550"/>
    </location>
</feature>
<feature type="turn" evidence="12">
    <location>
        <begin position="551"/>
        <end position="553"/>
    </location>
</feature>
<feature type="strand" evidence="12">
    <location>
        <begin position="554"/>
        <end position="556"/>
    </location>
</feature>
<feature type="turn" evidence="11">
    <location>
        <begin position="558"/>
        <end position="560"/>
    </location>
</feature>
<feature type="strand" evidence="11">
    <location>
        <begin position="563"/>
        <end position="566"/>
    </location>
</feature>
<feature type="turn" evidence="11">
    <location>
        <begin position="568"/>
        <end position="570"/>
    </location>
</feature>
<feature type="strand" evidence="11">
    <location>
        <begin position="573"/>
        <end position="576"/>
    </location>
</feature>
<feature type="strand" evidence="11">
    <location>
        <begin position="587"/>
        <end position="591"/>
    </location>
</feature>
<feature type="helix" evidence="11">
    <location>
        <begin position="594"/>
        <end position="597"/>
    </location>
</feature>
<feature type="turn" evidence="11">
    <location>
        <begin position="598"/>
        <end position="601"/>
    </location>
</feature>
<name>GLT10_HUMAN</name>
<protein>
    <recommendedName>
        <fullName>Polypeptide N-acetylgalactosaminyltransferase 10</fullName>
        <ecNumber>2.4.1.41</ecNumber>
    </recommendedName>
    <alternativeName>
        <fullName>Polypeptide GalNAc transferase 10</fullName>
        <shortName>GalNAc-T10</shortName>
        <shortName>pp-GaNTase 10</shortName>
    </alternativeName>
    <alternativeName>
        <fullName>Protein-UDP acetylgalactosaminyltransferase 10</fullName>
    </alternativeName>
    <alternativeName>
        <fullName>UDP-GalNAc:polypeptide N-acetylgalactosaminyltransferase 10</fullName>
    </alternativeName>
</protein>
<sequence length="603" mass="68992">MRRKEKRLLQAVALVLAALVLLPNVGLWALYRERQPDGTPGGSGAAVAPAAGQGSHSRQKKTFFLGDGQKLKDWHDKEAIRRDAQRVGNGEQGRPYPMTDAERVDQAYRENGFNIYVSDKISLNRSLPDIRHPNCNSKRYLETLPNTSIIIPFHNEGWSSLLRTVHSVLNRSPPELVAEIVLVDDFSDREHLKKPLEDYMALFPSVRILRTKKREGLIRTRMLGASVATGDVITFLDSHCEANVNWLPPLLDRIARNRKTIVCPMIDVIDHDDFRYETQAGDAMRGAFDWEMYYKRIPIPPELQKADPSDPFESPVMAGGLFAVDRKWFWELGGYDPGLEIWGGEQYEISFKVWMCGGRMEDIPCSRVGHIYRKYVPYKVPAGVSLARNLKRVAEVWMDEYAEYIYQRRPEYRHLSAGDVAVQKKLRSSLNCKSFKWFMTKIAWDLPKFYPPVEPPAAAWGEIRNVGTGLCADTKHGALGSPLRLEGCVRGRGEAAWNNMQVFTFTWREDIRPGDPQHTKKFCFDAISHTSPVTLYDCHSMKGNQLWKYRKDKTLYHPVSGSCMDCSESDHRIFMNTCNPSSLTQQWLFEHTNSTVLEKFNRN</sequence>
<comment type="function">
    <text>Catalyzes the initial reaction in O-linked oligosaccharide biosynthesis, the transfer of an N-acetyl-D-galactosamine residue to a serine or threonine residue on the protein receptor. Has activity toward Muc5Ac and EA2 peptide substrates.</text>
</comment>
<comment type="catalytic activity">
    <reaction evidence="5">
        <text>L-seryl-[protein] + UDP-N-acetyl-alpha-D-galactosamine = a 3-O-[N-acetyl-alpha-D-galactosaminyl]-L-seryl-[protein] + UDP + H(+)</text>
        <dbReference type="Rhea" id="RHEA:23956"/>
        <dbReference type="Rhea" id="RHEA-COMP:9863"/>
        <dbReference type="Rhea" id="RHEA-COMP:12788"/>
        <dbReference type="ChEBI" id="CHEBI:15378"/>
        <dbReference type="ChEBI" id="CHEBI:29999"/>
        <dbReference type="ChEBI" id="CHEBI:53604"/>
        <dbReference type="ChEBI" id="CHEBI:58223"/>
        <dbReference type="ChEBI" id="CHEBI:67138"/>
        <dbReference type="EC" id="2.4.1.41"/>
    </reaction>
</comment>
<comment type="catalytic activity">
    <reaction evidence="5">
        <text>L-threonyl-[protein] + UDP-N-acetyl-alpha-D-galactosamine = a 3-O-[N-acetyl-alpha-D-galactosaminyl]-L-threonyl-[protein] + UDP + H(+)</text>
        <dbReference type="Rhea" id="RHEA:52424"/>
        <dbReference type="Rhea" id="RHEA-COMP:11060"/>
        <dbReference type="Rhea" id="RHEA-COMP:11689"/>
        <dbReference type="ChEBI" id="CHEBI:15378"/>
        <dbReference type="ChEBI" id="CHEBI:30013"/>
        <dbReference type="ChEBI" id="CHEBI:58223"/>
        <dbReference type="ChEBI" id="CHEBI:67138"/>
        <dbReference type="ChEBI" id="CHEBI:87075"/>
        <dbReference type="EC" id="2.4.1.41"/>
    </reaction>
</comment>
<comment type="cofactor">
    <cofactor evidence="1">
        <name>Mn(2+)</name>
        <dbReference type="ChEBI" id="CHEBI:29035"/>
    </cofactor>
</comment>
<comment type="pathway">
    <text>Protein modification; protein glycosylation.</text>
</comment>
<comment type="subcellular location">
    <subcellularLocation>
        <location evidence="1">Golgi apparatus membrane</location>
        <topology evidence="1">Single-pass type II membrane protein</topology>
    </subcellularLocation>
</comment>
<comment type="alternative products">
    <event type="alternative splicing"/>
    <isoform>
        <id>Q86SR1-1</id>
        <name>1</name>
        <sequence type="displayed"/>
    </isoform>
    <isoform>
        <id>Q86SR1-2</id>
        <name>2</name>
        <sequence type="described" ref="VSP_011209"/>
    </isoform>
    <isoform>
        <id>Q86SR1-3</id>
        <name>3</name>
        <sequence type="described" ref="VSP_011212 VSP_011213"/>
    </isoform>
    <isoform>
        <id>Q86SR1-4</id>
        <name>4</name>
        <sequence type="described" ref="VSP_011207 VSP_011208 VSP_011214"/>
    </isoform>
</comment>
<comment type="tissue specificity">
    <text evidence="5">Widely expressed. Expressed at high level in small intestine, and at intermediate levels in stomach, pancreas, ovary, thyroid gland and spleen. Weakly expressed in other tissues.</text>
</comment>
<comment type="domain">
    <text evidence="1">There are two conserved domains in the glycosyltransferase region: the N-terminal domain (domain A, also called GT1 motif), which is probably involved in manganese coordination and substrate binding and the C-terminal domain (domain B, also called Gal/GalNAc-T motif), which is probably involved in catalytic reaction and UDP-Gal binding.</text>
</comment>
<comment type="domain">
    <text evidence="1">The ricin B-type lectin domain binds to GalNAc and contributes to the glycopeptide specificity.</text>
</comment>
<comment type="similarity">
    <text evidence="10">Belongs to the glycosyltransferase 2 family. GalNAc-T subfamily.</text>
</comment>
<comment type="caution">
    <text evidence="10">According to experiments made in rat, this enzyme is unable to transfer GalNAc onto serine or threonine residue on the protein receptor, but instead requires the prior addition of a GalNAc on a peptide before adding additional GalNAc moieties, thereby acting as a glycopeptide transferase.</text>
</comment>
<comment type="sequence caution" evidence="10">
    <conflict type="erroneous initiation">
        <sequence resource="EMBL-CDS" id="BAB14676"/>
    </conflict>
</comment>
<comment type="online information" name="Functional Glycomics Gateway - GTase">
    <link uri="http://www.functionalglycomics.org/glycomics/molecule/jsp/glycoEnzyme/viewGlycoEnzyme.jsp?gbpId=gt_hum_492"/>
    <text>Polypeptide N-acetylgalactosaminyltransferase 10</text>
</comment>
<comment type="online information" name="Functional Glycomics Gateway - GTase">
    <link uri="http://www.functionalglycomics.org/glycomics/molecule/jsp/glycoEnzyme/viewGlycoEnzyme.jsp?gbpId=gt_hum_493"/>
    <text>Polypeptide N-acetylgalactosaminyltransferase 10</text>
</comment>
<reference key="1">
    <citation type="journal article" date="2002" name="FEBS Lett.">
        <title>Characterization of a novel human UDP-GalNAc transferase, pp-GalNAc-T10.</title>
        <authorList>
            <person name="Cheng L."/>
            <person name="Tachibana K."/>
            <person name="Zhang Y."/>
            <person name="Guo J.-M."/>
            <person name="Tachibana K.K."/>
            <person name="Kameyama A."/>
            <person name="Wang H."/>
            <person name="Hiruma T."/>
            <person name="Iwasaki H."/>
            <person name="Togayachi A."/>
            <person name="Kudo T."/>
            <person name="Narimatsu H."/>
        </authorList>
    </citation>
    <scope>NUCLEOTIDE SEQUENCE [MRNA] (ISOFORM 1)</scope>
    <scope>ENZYME ACTIVITY</scope>
    <scope>TISSUE SPECIFICITY</scope>
    <source>
        <tissue>Colon cancer</tissue>
    </source>
</reference>
<reference key="2">
    <citation type="submission" date="2002-08" db="EMBL/GenBank/DDBJ databases">
        <authorList>
            <person name="Bennett E.P."/>
        </authorList>
    </citation>
    <scope>NUCLEOTIDE SEQUENCE [MRNA] (ISOFORM 1)</scope>
</reference>
<reference key="3">
    <citation type="journal article" date="2004" name="Nat. Genet.">
        <title>Complete sequencing and characterization of 21,243 full-length human cDNAs.</title>
        <authorList>
            <person name="Ota T."/>
            <person name="Suzuki Y."/>
            <person name="Nishikawa T."/>
            <person name="Otsuki T."/>
            <person name="Sugiyama T."/>
            <person name="Irie R."/>
            <person name="Wakamatsu A."/>
            <person name="Hayashi K."/>
            <person name="Sato H."/>
            <person name="Nagai K."/>
            <person name="Kimura K."/>
            <person name="Makita H."/>
            <person name="Sekine M."/>
            <person name="Obayashi M."/>
            <person name="Nishi T."/>
            <person name="Shibahara T."/>
            <person name="Tanaka T."/>
            <person name="Ishii S."/>
            <person name="Yamamoto J."/>
            <person name="Saito K."/>
            <person name="Kawai Y."/>
            <person name="Isono Y."/>
            <person name="Nakamura Y."/>
            <person name="Nagahari K."/>
            <person name="Murakami K."/>
            <person name="Yasuda T."/>
            <person name="Iwayanagi T."/>
            <person name="Wagatsuma M."/>
            <person name="Shiratori A."/>
            <person name="Sudo H."/>
            <person name="Hosoiri T."/>
            <person name="Kaku Y."/>
            <person name="Kodaira H."/>
            <person name="Kondo H."/>
            <person name="Sugawara M."/>
            <person name="Takahashi M."/>
            <person name="Kanda K."/>
            <person name="Yokoi T."/>
            <person name="Furuya T."/>
            <person name="Kikkawa E."/>
            <person name="Omura Y."/>
            <person name="Abe K."/>
            <person name="Kamihara K."/>
            <person name="Katsuta N."/>
            <person name="Sato K."/>
            <person name="Tanikawa M."/>
            <person name="Yamazaki M."/>
            <person name="Ninomiya K."/>
            <person name="Ishibashi T."/>
            <person name="Yamashita H."/>
            <person name="Murakawa K."/>
            <person name="Fujimori K."/>
            <person name="Tanai H."/>
            <person name="Kimata M."/>
            <person name="Watanabe M."/>
            <person name="Hiraoka S."/>
            <person name="Chiba Y."/>
            <person name="Ishida S."/>
            <person name="Ono Y."/>
            <person name="Takiguchi S."/>
            <person name="Watanabe S."/>
            <person name="Yosida M."/>
            <person name="Hotuta T."/>
            <person name="Kusano J."/>
            <person name="Kanehori K."/>
            <person name="Takahashi-Fujii A."/>
            <person name="Hara H."/>
            <person name="Tanase T.-O."/>
            <person name="Nomura Y."/>
            <person name="Togiya S."/>
            <person name="Komai F."/>
            <person name="Hara R."/>
            <person name="Takeuchi K."/>
            <person name="Arita M."/>
            <person name="Imose N."/>
            <person name="Musashino K."/>
            <person name="Yuuki H."/>
            <person name="Oshima A."/>
            <person name="Sasaki N."/>
            <person name="Aotsuka S."/>
            <person name="Yoshikawa Y."/>
            <person name="Matsunawa H."/>
            <person name="Ichihara T."/>
            <person name="Shiohata N."/>
            <person name="Sano S."/>
            <person name="Moriya S."/>
            <person name="Momiyama H."/>
            <person name="Satoh N."/>
            <person name="Takami S."/>
            <person name="Terashima Y."/>
            <person name="Suzuki O."/>
            <person name="Nakagawa S."/>
            <person name="Senoh A."/>
            <person name="Mizoguchi H."/>
            <person name="Goto Y."/>
            <person name="Shimizu F."/>
            <person name="Wakebe H."/>
            <person name="Hishigaki H."/>
            <person name="Watanabe T."/>
            <person name="Sugiyama A."/>
            <person name="Takemoto M."/>
            <person name="Kawakami B."/>
            <person name="Yamazaki M."/>
            <person name="Watanabe K."/>
            <person name="Kumagai A."/>
            <person name="Itakura S."/>
            <person name="Fukuzumi Y."/>
            <person name="Fujimori Y."/>
            <person name="Komiyama M."/>
            <person name="Tashiro H."/>
            <person name="Tanigami A."/>
            <person name="Fujiwara T."/>
            <person name="Ono T."/>
            <person name="Yamada K."/>
            <person name="Fujii Y."/>
            <person name="Ozaki K."/>
            <person name="Hirao M."/>
            <person name="Ohmori Y."/>
            <person name="Kawabata A."/>
            <person name="Hikiji T."/>
            <person name="Kobatake N."/>
            <person name="Inagaki H."/>
            <person name="Ikema Y."/>
            <person name="Okamoto S."/>
            <person name="Okitani R."/>
            <person name="Kawakami T."/>
            <person name="Noguchi S."/>
            <person name="Itoh T."/>
            <person name="Shigeta K."/>
            <person name="Senba T."/>
            <person name="Matsumura K."/>
            <person name="Nakajima Y."/>
            <person name="Mizuno T."/>
            <person name="Morinaga M."/>
            <person name="Sasaki M."/>
            <person name="Togashi T."/>
            <person name="Oyama M."/>
            <person name="Hata H."/>
            <person name="Watanabe M."/>
            <person name="Komatsu T."/>
            <person name="Mizushima-Sugano J."/>
            <person name="Satoh T."/>
            <person name="Shirai Y."/>
            <person name="Takahashi Y."/>
            <person name="Nakagawa K."/>
            <person name="Okumura K."/>
            <person name="Nagase T."/>
            <person name="Nomura N."/>
            <person name="Kikuchi H."/>
            <person name="Masuho Y."/>
            <person name="Yamashita R."/>
            <person name="Nakai K."/>
            <person name="Yada T."/>
            <person name="Nakamura Y."/>
            <person name="Ohara O."/>
            <person name="Isogai T."/>
            <person name="Sugano S."/>
        </authorList>
    </citation>
    <scope>NUCLEOTIDE SEQUENCE [LARGE SCALE MRNA] (ISOFORM 1)</scope>
    <scope>NUCLEOTIDE SEQUENCE [LARGE SCALE MRNA] OF 117-603 (ISOFORM 2)</scope>
    <source>
        <tissue>Brain</tissue>
        <tissue>Placenta</tissue>
    </source>
</reference>
<reference key="4">
    <citation type="journal article" date="2007" name="BMC Genomics">
        <title>The full-ORF clone resource of the German cDNA consortium.</title>
        <authorList>
            <person name="Bechtel S."/>
            <person name="Rosenfelder H."/>
            <person name="Duda A."/>
            <person name="Schmidt C.P."/>
            <person name="Ernst U."/>
            <person name="Wellenreuther R."/>
            <person name="Mehrle A."/>
            <person name="Schuster C."/>
            <person name="Bahr A."/>
            <person name="Bloecker H."/>
            <person name="Heubner D."/>
            <person name="Hoerlein A."/>
            <person name="Michel G."/>
            <person name="Wedler H."/>
            <person name="Koehrer K."/>
            <person name="Ottenwaelder B."/>
            <person name="Poustka A."/>
            <person name="Wiemann S."/>
            <person name="Schupp I."/>
        </authorList>
    </citation>
    <scope>NUCLEOTIDE SEQUENCE [LARGE SCALE MRNA] (ISOFORM 4)</scope>
    <source>
        <tissue>Uterus</tissue>
    </source>
</reference>
<reference key="5">
    <citation type="journal article" date="2003" name="DNA Res.">
        <title>Characterization of long cDNA clones from human adult spleen. II. The complete sequences of 81 cDNA clones.</title>
        <authorList>
            <person name="Jikuya H."/>
            <person name="Takano J."/>
            <person name="Kikuno R."/>
            <person name="Hirosawa M."/>
            <person name="Nagase T."/>
            <person name="Nomura N."/>
            <person name="Ohara O."/>
        </authorList>
    </citation>
    <scope>NUCLEOTIDE SEQUENCE [LARGE SCALE MRNA] OF 8-366 (ISOFORM 3)</scope>
    <source>
        <tissue>Spleen</tissue>
    </source>
</reference>
<reference key="6">
    <citation type="journal article" date="2004" name="Genome Res.">
        <title>The status, quality, and expansion of the NIH full-length cDNA project: the Mammalian Gene Collection (MGC).</title>
        <authorList>
            <consortium name="The MGC Project Team"/>
        </authorList>
    </citation>
    <scope>NUCLEOTIDE SEQUENCE [LARGE SCALE MRNA] OF 191-603 (ISOFORM 1)</scope>
    <source>
        <tissue>Kidney</tissue>
        <tissue>Skin</tissue>
    </source>
</reference>
<reference key="7">
    <citation type="journal article" date="2006" name="J. Mol. Biol.">
        <title>Structural basis of carbohydrate transfer activity by human UDP-GalNAc: polypeptide alpha-N-acetylgalactosaminyltransferase (pp-GalNAc-T10).</title>
        <authorList>
            <person name="Kubota T."/>
            <person name="Shiba T."/>
            <person name="Sugioka S."/>
            <person name="Furukawa S."/>
            <person name="Sawaki H."/>
            <person name="Kato R."/>
            <person name="Wakatsuki S."/>
            <person name="Narimatsu H."/>
        </authorList>
    </citation>
    <scope>X-RAY CRYSTALLOGRAPHY (2.5 ANGSTROMS) OF 40-603 IN COMPLEX WITH UDP-GALNAC AND GALNAC-SERINE</scope>
    <scope>DISULFIDE BOND</scope>
    <scope>MANGANESE-BINDING SITES</scope>
    <scope>GLYCOSYLATION AT ASN-124; ASN-146 AND ASN-593</scope>
</reference>
<keyword id="KW-0002">3D-structure</keyword>
<keyword id="KW-0025">Alternative splicing</keyword>
<keyword id="KW-1015">Disulfide bond</keyword>
<keyword id="KW-0325">Glycoprotein</keyword>
<keyword id="KW-0328">Glycosyltransferase</keyword>
<keyword id="KW-0333">Golgi apparatus</keyword>
<keyword id="KW-0430">Lectin</keyword>
<keyword id="KW-0464">Manganese</keyword>
<keyword id="KW-0472">Membrane</keyword>
<keyword id="KW-0479">Metal-binding</keyword>
<keyword id="KW-1267">Proteomics identification</keyword>
<keyword id="KW-1185">Reference proteome</keyword>
<keyword id="KW-0735">Signal-anchor</keyword>
<keyword id="KW-0808">Transferase</keyword>
<keyword id="KW-0812">Transmembrane</keyword>
<keyword id="KW-1133">Transmembrane helix</keyword>
<accession>Q86SR1</accession>
<accession>B3KXC9</accession>
<accession>Q6IN56</accession>
<accession>Q86VP8</accession>
<accession>Q8IXJ2</accession>
<accession>Q8TEJ2</accession>
<accession>Q96IV2</accession>
<accession>Q9H8E1</accession>
<accession>Q9Y4M4</accession>
<evidence type="ECO:0000250" key="1"/>
<evidence type="ECO:0000255" key="2"/>
<evidence type="ECO:0000255" key="3">
    <source>
        <dbReference type="PROSITE-ProRule" id="PRU00174"/>
    </source>
</evidence>
<evidence type="ECO:0000256" key="4">
    <source>
        <dbReference type="SAM" id="MobiDB-lite"/>
    </source>
</evidence>
<evidence type="ECO:0000269" key="5">
    <source>
    </source>
</evidence>
<evidence type="ECO:0000269" key="6">
    <source>
    </source>
</evidence>
<evidence type="ECO:0000303" key="7">
    <source>
    </source>
</evidence>
<evidence type="ECO:0000303" key="8">
    <source>
    </source>
</evidence>
<evidence type="ECO:0000303" key="9">
    <source>
    </source>
</evidence>
<evidence type="ECO:0000305" key="10"/>
<evidence type="ECO:0007829" key="11">
    <source>
        <dbReference type="PDB" id="2D7I"/>
    </source>
</evidence>
<evidence type="ECO:0007829" key="12">
    <source>
        <dbReference type="PDB" id="2D7R"/>
    </source>
</evidence>
<gene>
    <name type="primary">GALNT10</name>
</gene>
<organism>
    <name type="scientific">Homo sapiens</name>
    <name type="common">Human</name>
    <dbReference type="NCBI Taxonomy" id="9606"/>
    <lineage>
        <taxon>Eukaryota</taxon>
        <taxon>Metazoa</taxon>
        <taxon>Chordata</taxon>
        <taxon>Craniata</taxon>
        <taxon>Vertebrata</taxon>
        <taxon>Euteleostomi</taxon>
        <taxon>Mammalia</taxon>
        <taxon>Eutheria</taxon>
        <taxon>Euarchontoglires</taxon>
        <taxon>Primates</taxon>
        <taxon>Haplorrhini</taxon>
        <taxon>Catarrhini</taxon>
        <taxon>Hominidae</taxon>
        <taxon>Homo</taxon>
    </lineage>
</organism>